<feature type="chain" id="PRO_0000166571" description="Guanosine-3',5'-bis(diphosphate) 3'-pyrophosphohydrolase">
    <location>
        <begin position="1"/>
        <end position="677"/>
    </location>
</feature>
<feature type="domain" description="HD" evidence="3">
    <location>
        <begin position="18"/>
        <end position="117"/>
    </location>
</feature>
<feature type="domain" description="TGS" evidence="4">
    <location>
        <begin position="360"/>
        <end position="421"/>
    </location>
</feature>
<feature type="domain" description="ACT" evidence="2">
    <location>
        <begin position="601"/>
        <end position="675"/>
    </location>
</feature>
<keyword id="KW-0378">Hydrolase</keyword>
<keyword id="KW-0464">Manganese</keyword>
<keyword id="KW-1185">Reference proteome</keyword>
<organism>
    <name type="scientific">Haemophilus influenzae (strain ATCC 51907 / DSM 11121 / KW20 / Rd)</name>
    <dbReference type="NCBI Taxonomy" id="71421"/>
    <lineage>
        <taxon>Bacteria</taxon>
        <taxon>Pseudomonadati</taxon>
        <taxon>Pseudomonadota</taxon>
        <taxon>Gammaproteobacteria</taxon>
        <taxon>Pasteurellales</taxon>
        <taxon>Pasteurellaceae</taxon>
        <taxon>Haemophilus</taxon>
    </lineage>
</organism>
<name>SPOT_HAEIN</name>
<proteinExistence type="inferred from homology"/>
<accession>P43811</accession>
<sequence>MIARDAHEGQFRSSGEPYITHPVAVASIIAQLHLDHEAVMAALLHDVIEDTPYTEEQLKEEFGASVAEIVDGVSKLDKLKFRTRQEAQVENFRKMILAMTRDIRVVLIKLADRTHNMRTLGSLRPDKRRRIAKETLEIYCPLAHRLGIEHIKNELEDLSFQAMHPHRYEVLKKLVDVARSNRQDLIERISQEIKVRLENSGIFARVWGREKHLYKIYQKMRIKDQEFHSIMDIYAFRVIVKNVDDCYRVLGQMHNLYKPRPGRVKDYIAVPKANGYQSLQTSMIGPKGVPVEVHIHTEDMEQVAEMGITAHWVYKENGKNDSTTAQIRVQRWLQSLVEIQQSVGNSFEFIENVKSEFFPKEIYVFTPKGRIVELPMGATAVDFAYAVHSDVGNTCVGVTVEHKPYPLSKALESGQTVNIITDPNAHPEVAWLNFVVTARAKTRIRHYLKQRCEEDAVKLGEVELNVALQPHNLGDFSIQQIRTVLDALALSSLDELLREIGLGNQSASMIAHQFVGVPLESANTKNLEFESKILTIAPMQVGKTQFAQCCHPILGDPIVGCCTEKNTVVVHHQHCASLKNACRQSLAKWDNVQSAVNFEAELQIEILNEQNALLSLMTAISASESSLQNIWTEELENNLLLVILQVCVKDIKHLANIVHRIKGITGVVNVKRNINEL</sequence>
<reference key="1">
    <citation type="journal article" date="1995" name="Science">
        <title>Whole-genome random sequencing and assembly of Haemophilus influenzae Rd.</title>
        <authorList>
            <person name="Fleischmann R.D."/>
            <person name="Adams M.D."/>
            <person name="White O."/>
            <person name="Clayton R.A."/>
            <person name="Kirkness E.F."/>
            <person name="Kerlavage A.R."/>
            <person name="Bult C.J."/>
            <person name="Tomb J.-F."/>
            <person name="Dougherty B.A."/>
            <person name="Merrick J.M."/>
            <person name="McKenney K."/>
            <person name="Sutton G.G."/>
            <person name="FitzHugh W."/>
            <person name="Fields C.A."/>
            <person name="Gocayne J.D."/>
            <person name="Scott J.D."/>
            <person name="Shirley R."/>
            <person name="Liu L.-I."/>
            <person name="Glodek A."/>
            <person name="Kelley J.M."/>
            <person name="Weidman J.F."/>
            <person name="Phillips C.A."/>
            <person name="Spriggs T."/>
            <person name="Hedblom E."/>
            <person name="Cotton M.D."/>
            <person name="Utterback T.R."/>
            <person name="Hanna M.C."/>
            <person name="Nguyen D.T."/>
            <person name="Saudek D.M."/>
            <person name="Brandon R.C."/>
            <person name="Fine L.D."/>
            <person name="Fritchman J.L."/>
            <person name="Fuhrmann J.L."/>
            <person name="Geoghagen N.S.M."/>
            <person name="Gnehm C.L."/>
            <person name="McDonald L.A."/>
            <person name="Small K.V."/>
            <person name="Fraser C.M."/>
            <person name="Smith H.O."/>
            <person name="Venter J.C."/>
        </authorList>
    </citation>
    <scope>NUCLEOTIDE SEQUENCE [LARGE SCALE GENOMIC DNA]</scope>
    <source>
        <strain>ATCC 51907 / DSM 11121 / KW20 / Rd</strain>
    </source>
</reference>
<comment type="function">
    <text evidence="1">In eubacteria ppGpp (guanosine 3'-diphosphate 5'-diphosphate) is a mediator of the stringent response that coordinates a variety of cellular activities in response to changes in nutritional abundance. This enzyme catalyzes the degradation of ppGpp into GDP. It may also be capable of catalyzing the synthesis of ppGpp (By similarity).</text>
</comment>
<comment type="catalytic activity">
    <reaction>
        <text>guanosine 3',5'-bis(diphosphate) + H2O = GDP + diphosphate + H(+)</text>
        <dbReference type="Rhea" id="RHEA:14253"/>
        <dbReference type="ChEBI" id="CHEBI:15377"/>
        <dbReference type="ChEBI" id="CHEBI:15378"/>
        <dbReference type="ChEBI" id="CHEBI:33019"/>
        <dbReference type="ChEBI" id="CHEBI:58189"/>
        <dbReference type="ChEBI" id="CHEBI:77828"/>
        <dbReference type="EC" id="3.1.7.2"/>
    </reaction>
</comment>
<comment type="cofactor">
    <cofactor evidence="1">
        <name>Mn(2+)</name>
        <dbReference type="ChEBI" id="CHEBI:29035"/>
    </cofactor>
</comment>
<comment type="pathway">
    <text>Purine metabolism; ppGpp biosynthesis; ppGpp from GDP: step 1/1.</text>
</comment>
<comment type="similarity">
    <text evidence="5">Belongs to the RelA/SpoT family.</text>
</comment>
<dbReference type="EC" id="3.1.7.2"/>
<dbReference type="EMBL" id="L42023">
    <property type="protein sequence ID" value="AAC23388.1"/>
    <property type="molecule type" value="Genomic_DNA"/>
</dbReference>
<dbReference type="PIR" id="F64139">
    <property type="entry name" value="F64139"/>
</dbReference>
<dbReference type="RefSeq" id="NP_439885.2">
    <property type="nucleotide sequence ID" value="NC_000907.1"/>
</dbReference>
<dbReference type="SMR" id="P43811"/>
<dbReference type="STRING" id="71421.HI_1741"/>
<dbReference type="EnsemblBacteria" id="AAC23388">
    <property type="protein sequence ID" value="AAC23388"/>
    <property type="gene ID" value="HI_1741"/>
</dbReference>
<dbReference type="KEGG" id="hin:HI_1741"/>
<dbReference type="PATRIC" id="fig|71421.8.peg.1824"/>
<dbReference type="eggNOG" id="COG0317">
    <property type="taxonomic scope" value="Bacteria"/>
</dbReference>
<dbReference type="HOGENOM" id="CLU_012300_3_0_6"/>
<dbReference type="OrthoDB" id="9805041at2"/>
<dbReference type="PhylomeDB" id="P43811"/>
<dbReference type="UniPathway" id="UPA00908">
    <property type="reaction ID" value="UER00886"/>
</dbReference>
<dbReference type="Proteomes" id="UP000000579">
    <property type="component" value="Chromosome"/>
</dbReference>
<dbReference type="GO" id="GO:0008728">
    <property type="term" value="F:GTP diphosphokinase activity"/>
    <property type="evidence" value="ECO:0000318"/>
    <property type="project" value="GO_Central"/>
</dbReference>
<dbReference type="GO" id="GO:0008893">
    <property type="term" value="F:guanosine-3',5'-bis(diphosphate) 3'-diphosphatase activity"/>
    <property type="evidence" value="ECO:0000318"/>
    <property type="project" value="GO_Central"/>
</dbReference>
<dbReference type="GO" id="GO:0015970">
    <property type="term" value="P:guanosine tetraphosphate biosynthetic process"/>
    <property type="evidence" value="ECO:0007669"/>
    <property type="project" value="UniProtKB-UniPathway"/>
</dbReference>
<dbReference type="GO" id="GO:0015969">
    <property type="term" value="P:guanosine tetraphosphate metabolic process"/>
    <property type="evidence" value="ECO:0000318"/>
    <property type="project" value="GO_Central"/>
</dbReference>
<dbReference type="GO" id="GO:0042594">
    <property type="term" value="P:response to starvation"/>
    <property type="evidence" value="ECO:0000318"/>
    <property type="project" value="GO_Central"/>
</dbReference>
<dbReference type="CDD" id="cd04876">
    <property type="entry name" value="ACT_RelA-SpoT"/>
    <property type="match status" value="1"/>
</dbReference>
<dbReference type="CDD" id="cd00077">
    <property type="entry name" value="HDc"/>
    <property type="match status" value="1"/>
</dbReference>
<dbReference type="CDD" id="cd05399">
    <property type="entry name" value="NT_Rel-Spo_like"/>
    <property type="match status" value="1"/>
</dbReference>
<dbReference type="CDD" id="cd01668">
    <property type="entry name" value="TGS_RSH"/>
    <property type="match status" value="1"/>
</dbReference>
<dbReference type="FunFam" id="3.10.20.30:FF:000002">
    <property type="entry name" value="GTP pyrophosphokinase (RelA/SpoT)"/>
    <property type="match status" value="1"/>
</dbReference>
<dbReference type="FunFam" id="1.10.3210.10:FF:000001">
    <property type="entry name" value="GTP pyrophosphokinase RelA"/>
    <property type="match status" value="1"/>
</dbReference>
<dbReference type="FunFam" id="3.30.460.10:FF:000001">
    <property type="entry name" value="GTP pyrophosphokinase RelA"/>
    <property type="match status" value="1"/>
</dbReference>
<dbReference type="Gene3D" id="3.10.20.30">
    <property type="match status" value="1"/>
</dbReference>
<dbReference type="Gene3D" id="3.30.70.260">
    <property type="match status" value="1"/>
</dbReference>
<dbReference type="Gene3D" id="3.30.460.10">
    <property type="entry name" value="Beta Polymerase, domain 2"/>
    <property type="match status" value="1"/>
</dbReference>
<dbReference type="Gene3D" id="1.10.3210.10">
    <property type="entry name" value="Hypothetical protein af1432"/>
    <property type="match status" value="1"/>
</dbReference>
<dbReference type="InterPro" id="IPR002912">
    <property type="entry name" value="ACT_dom"/>
</dbReference>
<dbReference type="InterPro" id="IPR012675">
    <property type="entry name" value="Beta-grasp_dom_sf"/>
</dbReference>
<dbReference type="InterPro" id="IPR003607">
    <property type="entry name" value="HD/PDEase_dom"/>
</dbReference>
<dbReference type="InterPro" id="IPR006674">
    <property type="entry name" value="HD_domain"/>
</dbReference>
<dbReference type="InterPro" id="IPR043519">
    <property type="entry name" value="NT_sf"/>
</dbReference>
<dbReference type="InterPro" id="IPR004811">
    <property type="entry name" value="RelA/Spo_fam"/>
</dbReference>
<dbReference type="InterPro" id="IPR045600">
    <property type="entry name" value="RelA/SpoT_AH_RIS"/>
</dbReference>
<dbReference type="InterPro" id="IPR007685">
    <property type="entry name" value="RelA_SpoT"/>
</dbReference>
<dbReference type="InterPro" id="IPR004095">
    <property type="entry name" value="TGS"/>
</dbReference>
<dbReference type="InterPro" id="IPR012676">
    <property type="entry name" value="TGS-like"/>
</dbReference>
<dbReference type="InterPro" id="IPR033655">
    <property type="entry name" value="TGS_RelA/SpoT"/>
</dbReference>
<dbReference type="NCBIfam" id="NF008303">
    <property type="entry name" value="PRK11092.1"/>
    <property type="match status" value="1"/>
</dbReference>
<dbReference type="NCBIfam" id="TIGR00691">
    <property type="entry name" value="spoT_relA"/>
    <property type="match status" value="1"/>
</dbReference>
<dbReference type="PANTHER" id="PTHR21262:SF36">
    <property type="entry name" value="BIFUNCTIONAL (P)PPGPP SYNTHASE_HYDROLASE SPOT"/>
    <property type="match status" value="1"/>
</dbReference>
<dbReference type="PANTHER" id="PTHR21262">
    <property type="entry name" value="GUANOSINE-3',5'-BIS DIPHOSPHATE 3'-PYROPHOSPHOHYDROLASE"/>
    <property type="match status" value="1"/>
</dbReference>
<dbReference type="Pfam" id="PF13291">
    <property type="entry name" value="ACT_4"/>
    <property type="match status" value="1"/>
</dbReference>
<dbReference type="Pfam" id="PF13328">
    <property type="entry name" value="HD_4"/>
    <property type="match status" value="1"/>
</dbReference>
<dbReference type="Pfam" id="PF19296">
    <property type="entry name" value="RelA_AH_RIS"/>
    <property type="match status" value="1"/>
</dbReference>
<dbReference type="Pfam" id="PF04607">
    <property type="entry name" value="RelA_SpoT"/>
    <property type="match status" value="1"/>
</dbReference>
<dbReference type="Pfam" id="PF02824">
    <property type="entry name" value="TGS"/>
    <property type="match status" value="1"/>
</dbReference>
<dbReference type="SMART" id="SM00471">
    <property type="entry name" value="HDc"/>
    <property type="match status" value="1"/>
</dbReference>
<dbReference type="SMART" id="SM00954">
    <property type="entry name" value="RelA_SpoT"/>
    <property type="match status" value="1"/>
</dbReference>
<dbReference type="SUPFAM" id="SSF109604">
    <property type="entry name" value="HD-domain/PDEase-like"/>
    <property type="match status" value="1"/>
</dbReference>
<dbReference type="SUPFAM" id="SSF81301">
    <property type="entry name" value="Nucleotidyltransferase"/>
    <property type="match status" value="1"/>
</dbReference>
<dbReference type="SUPFAM" id="SSF81271">
    <property type="entry name" value="TGS-like"/>
    <property type="match status" value="1"/>
</dbReference>
<dbReference type="PROSITE" id="PS51671">
    <property type="entry name" value="ACT"/>
    <property type="match status" value="1"/>
</dbReference>
<dbReference type="PROSITE" id="PS51831">
    <property type="entry name" value="HD"/>
    <property type="match status" value="1"/>
</dbReference>
<dbReference type="PROSITE" id="PS51880">
    <property type="entry name" value="TGS"/>
    <property type="match status" value="1"/>
</dbReference>
<gene>
    <name type="primary">spoT</name>
    <name type="ordered locus">HI_1741</name>
</gene>
<protein>
    <recommendedName>
        <fullName>Guanosine-3',5'-bis(diphosphate) 3'-pyrophosphohydrolase</fullName>
        <ecNumber>3.1.7.2</ecNumber>
    </recommendedName>
    <alternativeName>
        <fullName>Penta-phosphate guanosine-3'-pyrophosphohydrolase</fullName>
        <shortName>(ppGpp)ase</shortName>
    </alternativeName>
</protein>
<evidence type="ECO:0000250" key="1"/>
<evidence type="ECO:0000255" key="2">
    <source>
        <dbReference type="PROSITE-ProRule" id="PRU01007"/>
    </source>
</evidence>
<evidence type="ECO:0000255" key="3">
    <source>
        <dbReference type="PROSITE-ProRule" id="PRU01175"/>
    </source>
</evidence>
<evidence type="ECO:0000255" key="4">
    <source>
        <dbReference type="PROSITE-ProRule" id="PRU01228"/>
    </source>
</evidence>
<evidence type="ECO:0000305" key="5"/>